<accession>A7MPH8</accession>
<comment type="function">
    <text evidence="1">One of the primary rRNA binding proteins, this protein initially binds near the 5'-end of the 23S rRNA. It is important during the early stages of 50S assembly. It makes multiple contacts with different domains of the 23S rRNA in the assembled 50S subunit and ribosome.</text>
</comment>
<comment type="function">
    <text evidence="1">Forms part of the polypeptide exit tunnel.</text>
</comment>
<comment type="subunit">
    <text evidence="1">Part of the 50S ribosomal subunit.</text>
</comment>
<comment type="similarity">
    <text evidence="1">Belongs to the universal ribosomal protein uL4 family.</text>
</comment>
<sequence>MELVLKDAQSALTVSETTFGRDFNEALVHQVVVAYAAGARQGTRAQKTRAEVTGSGKKPWRQKGTGRARSGSIKSPIWRSGGVTFAARPQDHSQKVNKKMYRGALKSILSELVRQDRLIVVEKFSVEAPKTKLLAQKLKDMALEDVLIITGELDENLFLAARNLHKVDVRDATGIDPVSLIAFDKVVMTADAVKQVEEMLA</sequence>
<protein>
    <recommendedName>
        <fullName evidence="1">Large ribosomal subunit protein uL4</fullName>
    </recommendedName>
    <alternativeName>
        <fullName evidence="3">50S ribosomal protein L4</fullName>
    </alternativeName>
</protein>
<reference key="1">
    <citation type="journal article" date="2010" name="PLoS ONE">
        <title>Genome sequence of Cronobacter sakazakii BAA-894 and comparative genomic hybridization analysis with other Cronobacter species.</title>
        <authorList>
            <person name="Kucerova E."/>
            <person name="Clifton S.W."/>
            <person name="Xia X.Q."/>
            <person name="Long F."/>
            <person name="Porwollik S."/>
            <person name="Fulton L."/>
            <person name="Fronick C."/>
            <person name="Minx P."/>
            <person name="Kyung K."/>
            <person name="Warren W."/>
            <person name="Fulton R."/>
            <person name="Feng D."/>
            <person name="Wollam A."/>
            <person name="Shah N."/>
            <person name="Bhonagiri V."/>
            <person name="Nash W.E."/>
            <person name="Hallsworth-Pepin K."/>
            <person name="Wilson R.K."/>
            <person name="McClelland M."/>
            <person name="Forsythe S.J."/>
        </authorList>
    </citation>
    <scope>NUCLEOTIDE SEQUENCE [LARGE SCALE GENOMIC DNA]</scope>
    <source>
        <strain>ATCC BAA-894</strain>
    </source>
</reference>
<dbReference type="EMBL" id="CP000783">
    <property type="protein sequence ID" value="ABU75313.1"/>
    <property type="molecule type" value="Genomic_DNA"/>
</dbReference>
<dbReference type="RefSeq" id="WP_000424395.1">
    <property type="nucleotide sequence ID" value="NC_009778.1"/>
</dbReference>
<dbReference type="SMR" id="A7MPH8"/>
<dbReference type="GeneID" id="97442859"/>
<dbReference type="KEGG" id="esa:ESA_00004"/>
<dbReference type="HOGENOM" id="CLU_041575_5_2_6"/>
<dbReference type="Proteomes" id="UP000000260">
    <property type="component" value="Chromosome"/>
</dbReference>
<dbReference type="GO" id="GO:1990904">
    <property type="term" value="C:ribonucleoprotein complex"/>
    <property type="evidence" value="ECO:0007669"/>
    <property type="project" value="UniProtKB-KW"/>
</dbReference>
<dbReference type="GO" id="GO:0005840">
    <property type="term" value="C:ribosome"/>
    <property type="evidence" value="ECO:0007669"/>
    <property type="project" value="UniProtKB-KW"/>
</dbReference>
<dbReference type="GO" id="GO:0019843">
    <property type="term" value="F:rRNA binding"/>
    <property type="evidence" value="ECO:0007669"/>
    <property type="project" value="UniProtKB-UniRule"/>
</dbReference>
<dbReference type="GO" id="GO:0003735">
    <property type="term" value="F:structural constituent of ribosome"/>
    <property type="evidence" value="ECO:0007669"/>
    <property type="project" value="InterPro"/>
</dbReference>
<dbReference type="GO" id="GO:0006412">
    <property type="term" value="P:translation"/>
    <property type="evidence" value="ECO:0007669"/>
    <property type="project" value="UniProtKB-UniRule"/>
</dbReference>
<dbReference type="FunFam" id="3.40.1370.10:FF:000001">
    <property type="entry name" value="50S ribosomal protein L4"/>
    <property type="match status" value="1"/>
</dbReference>
<dbReference type="Gene3D" id="3.40.1370.10">
    <property type="match status" value="1"/>
</dbReference>
<dbReference type="HAMAP" id="MF_01328_B">
    <property type="entry name" value="Ribosomal_uL4_B"/>
    <property type="match status" value="1"/>
</dbReference>
<dbReference type="InterPro" id="IPR002136">
    <property type="entry name" value="Ribosomal_uL4"/>
</dbReference>
<dbReference type="InterPro" id="IPR013005">
    <property type="entry name" value="Ribosomal_uL4-like"/>
</dbReference>
<dbReference type="InterPro" id="IPR023574">
    <property type="entry name" value="Ribosomal_uL4_dom_sf"/>
</dbReference>
<dbReference type="NCBIfam" id="TIGR03953">
    <property type="entry name" value="rplD_bact"/>
    <property type="match status" value="1"/>
</dbReference>
<dbReference type="PANTHER" id="PTHR10746">
    <property type="entry name" value="50S RIBOSOMAL PROTEIN L4"/>
    <property type="match status" value="1"/>
</dbReference>
<dbReference type="PANTHER" id="PTHR10746:SF6">
    <property type="entry name" value="LARGE RIBOSOMAL SUBUNIT PROTEIN UL4M"/>
    <property type="match status" value="1"/>
</dbReference>
<dbReference type="Pfam" id="PF00573">
    <property type="entry name" value="Ribosomal_L4"/>
    <property type="match status" value="1"/>
</dbReference>
<dbReference type="SUPFAM" id="SSF52166">
    <property type="entry name" value="Ribosomal protein L4"/>
    <property type="match status" value="1"/>
</dbReference>
<gene>
    <name evidence="1" type="primary">rplD</name>
    <name type="ordered locus">ESA_00004</name>
</gene>
<feature type="chain" id="PRO_1000052398" description="Large ribosomal subunit protein uL4">
    <location>
        <begin position="1"/>
        <end position="201"/>
    </location>
</feature>
<feature type="region of interest" description="Disordered" evidence="2">
    <location>
        <begin position="44"/>
        <end position="71"/>
    </location>
</feature>
<keyword id="KW-1185">Reference proteome</keyword>
<keyword id="KW-0687">Ribonucleoprotein</keyword>
<keyword id="KW-0689">Ribosomal protein</keyword>
<keyword id="KW-0694">RNA-binding</keyword>
<keyword id="KW-0699">rRNA-binding</keyword>
<proteinExistence type="inferred from homology"/>
<organism>
    <name type="scientific">Cronobacter sakazakii (strain ATCC BAA-894)</name>
    <name type="common">Enterobacter sakazakii</name>
    <dbReference type="NCBI Taxonomy" id="290339"/>
    <lineage>
        <taxon>Bacteria</taxon>
        <taxon>Pseudomonadati</taxon>
        <taxon>Pseudomonadota</taxon>
        <taxon>Gammaproteobacteria</taxon>
        <taxon>Enterobacterales</taxon>
        <taxon>Enterobacteriaceae</taxon>
        <taxon>Cronobacter</taxon>
    </lineage>
</organism>
<name>RL4_CROS8</name>
<evidence type="ECO:0000255" key="1">
    <source>
        <dbReference type="HAMAP-Rule" id="MF_01328"/>
    </source>
</evidence>
<evidence type="ECO:0000256" key="2">
    <source>
        <dbReference type="SAM" id="MobiDB-lite"/>
    </source>
</evidence>
<evidence type="ECO:0000305" key="3"/>